<keyword id="KW-0997">Cell inner membrane</keyword>
<keyword id="KW-1003">Cell membrane</keyword>
<keyword id="KW-0472">Membrane</keyword>
<keyword id="KW-0520">NAD</keyword>
<keyword id="KW-0874">Quinone</keyword>
<keyword id="KW-1278">Translocase</keyword>
<keyword id="KW-0812">Transmembrane</keyword>
<keyword id="KW-1133">Transmembrane helix</keyword>
<keyword id="KW-0830">Ubiquinone</keyword>
<dbReference type="EC" id="7.1.1.-" evidence="1"/>
<dbReference type="EMBL" id="CP001157">
    <property type="protein sequence ID" value="ACO79022.1"/>
    <property type="molecule type" value="Genomic_DNA"/>
</dbReference>
<dbReference type="RefSeq" id="WP_012701409.1">
    <property type="nucleotide sequence ID" value="NC_012560.1"/>
</dbReference>
<dbReference type="SMR" id="C1DL20"/>
<dbReference type="STRING" id="322710.Avin_28500"/>
<dbReference type="EnsemblBacteria" id="ACO79022">
    <property type="protein sequence ID" value="ACO79022"/>
    <property type="gene ID" value="Avin_28500"/>
</dbReference>
<dbReference type="GeneID" id="88185965"/>
<dbReference type="KEGG" id="avn:Avin_28500"/>
<dbReference type="eggNOG" id="COG1005">
    <property type="taxonomic scope" value="Bacteria"/>
</dbReference>
<dbReference type="HOGENOM" id="CLU_015134_0_1_6"/>
<dbReference type="OrthoDB" id="9803734at2"/>
<dbReference type="Proteomes" id="UP000002424">
    <property type="component" value="Chromosome"/>
</dbReference>
<dbReference type="GO" id="GO:0005886">
    <property type="term" value="C:plasma membrane"/>
    <property type="evidence" value="ECO:0007669"/>
    <property type="project" value="UniProtKB-SubCell"/>
</dbReference>
<dbReference type="GO" id="GO:0003954">
    <property type="term" value="F:NADH dehydrogenase activity"/>
    <property type="evidence" value="ECO:0007669"/>
    <property type="project" value="TreeGrafter"/>
</dbReference>
<dbReference type="GO" id="GO:0016655">
    <property type="term" value="F:oxidoreductase activity, acting on NAD(P)H, quinone or similar compound as acceptor"/>
    <property type="evidence" value="ECO:0007669"/>
    <property type="project" value="UniProtKB-UniRule"/>
</dbReference>
<dbReference type="GO" id="GO:0048038">
    <property type="term" value="F:quinone binding"/>
    <property type="evidence" value="ECO:0007669"/>
    <property type="project" value="UniProtKB-KW"/>
</dbReference>
<dbReference type="GO" id="GO:0009060">
    <property type="term" value="P:aerobic respiration"/>
    <property type="evidence" value="ECO:0007669"/>
    <property type="project" value="TreeGrafter"/>
</dbReference>
<dbReference type="HAMAP" id="MF_01350">
    <property type="entry name" value="NDH1_NuoH"/>
    <property type="match status" value="1"/>
</dbReference>
<dbReference type="InterPro" id="IPR001694">
    <property type="entry name" value="NADH_UbQ_OxRdtase_su1/FPO"/>
</dbReference>
<dbReference type="InterPro" id="IPR018086">
    <property type="entry name" value="NADH_UbQ_OxRdtase_su1_CS"/>
</dbReference>
<dbReference type="NCBIfam" id="NF004740">
    <property type="entry name" value="PRK06076.1-1"/>
    <property type="match status" value="1"/>
</dbReference>
<dbReference type="NCBIfam" id="NF004741">
    <property type="entry name" value="PRK06076.1-2"/>
    <property type="match status" value="1"/>
</dbReference>
<dbReference type="PANTHER" id="PTHR11432">
    <property type="entry name" value="NADH DEHYDROGENASE SUBUNIT 1"/>
    <property type="match status" value="1"/>
</dbReference>
<dbReference type="PANTHER" id="PTHR11432:SF3">
    <property type="entry name" value="NADH-UBIQUINONE OXIDOREDUCTASE CHAIN 1"/>
    <property type="match status" value="1"/>
</dbReference>
<dbReference type="Pfam" id="PF00146">
    <property type="entry name" value="NADHdh"/>
    <property type="match status" value="1"/>
</dbReference>
<dbReference type="PROSITE" id="PS00668">
    <property type="entry name" value="COMPLEX1_ND1_2"/>
    <property type="match status" value="1"/>
</dbReference>
<comment type="function">
    <text evidence="1">NDH-1 shuttles electrons from NADH, via FMN and iron-sulfur (Fe-S) centers, to quinones in the respiratory chain. The immediate electron acceptor for the enzyme in this species is believed to be ubiquinone. Couples the redox reaction to proton translocation (for every two electrons transferred, four hydrogen ions are translocated across the cytoplasmic membrane), and thus conserves the redox energy in a proton gradient. This subunit may bind ubiquinone.</text>
</comment>
<comment type="catalytic activity">
    <reaction evidence="1">
        <text>a quinone + NADH + 5 H(+)(in) = a quinol + NAD(+) + 4 H(+)(out)</text>
        <dbReference type="Rhea" id="RHEA:57888"/>
        <dbReference type="ChEBI" id="CHEBI:15378"/>
        <dbReference type="ChEBI" id="CHEBI:24646"/>
        <dbReference type="ChEBI" id="CHEBI:57540"/>
        <dbReference type="ChEBI" id="CHEBI:57945"/>
        <dbReference type="ChEBI" id="CHEBI:132124"/>
    </reaction>
</comment>
<comment type="subunit">
    <text evidence="1">NDH-1 is composed of 13 different subunits. Subunits NuoA, H, J, K, L, M, N constitute the membrane sector of the complex.</text>
</comment>
<comment type="subcellular location">
    <subcellularLocation>
        <location evidence="1">Cell inner membrane</location>
        <topology evidence="1">Multi-pass membrane protein</topology>
    </subcellularLocation>
</comment>
<comment type="similarity">
    <text evidence="1">Belongs to the complex I subunit 1 family.</text>
</comment>
<organism>
    <name type="scientific">Azotobacter vinelandii (strain DJ / ATCC BAA-1303)</name>
    <dbReference type="NCBI Taxonomy" id="322710"/>
    <lineage>
        <taxon>Bacteria</taxon>
        <taxon>Pseudomonadati</taxon>
        <taxon>Pseudomonadota</taxon>
        <taxon>Gammaproteobacteria</taxon>
        <taxon>Pseudomonadales</taxon>
        <taxon>Pseudomonadaceae</taxon>
        <taxon>Azotobacter</taxon>
    </lineage>
</organism>
<evidence type="ECO:0000255" key="1">
    <source>
        <dbReference type="HAMAP-Rule" id="MF_01350"/>
    </source>
</evidence>
<accession>C1DL20</accession>
<feature type="chain" id="PRO_1000214837" description="NADH-quinone oxidoreductase subunit H">
    <location>
        <begin position="1"/>
        <end position="329"/>
    </location>
</feature>
<feature type="transmembrane region" description="Helical" evidence="1">
    <location>
        <begin position="11"/>
        <end position="31"/>
    </location>
</feature>
<feature type="transmembrane region" description="Helical" evidence="1">
    <location>
        <begin position="81"/>
        <end position="101"/>
    </location>
</feature>
<feature type="transmembrane region" description="Helical" evidence="1">
    <location>
        <begin position="114"/>
        <end position="134"/>
    </location>
</feature>
<feature type="transmembrane region" description="Helical" evidence="1">
    <location>
        <begin position="154"/>
        <end position="174"/>
    </location>
</feature>
<feature type="transmembrane region" description="Helical" evidence="1">
    <location>
        <begin position="187"/>
        <end position="207"/>
    </location>
</feature>
<feature type="transmembrane region" description="Helical" evidence="1">
    <location>
        <begin position="238"/>
        <end position="258"/>
    </location>
</feature>
<feature type="transmembrane region" description="Helical" evidence="1">
    <location>
        <begin position="270"/>
        <end position="290"/>
    </location>
</feature>
<feature type="transmembrane region" description="Helical" evidence="1">
    <location>
        <begin position="309"/>
        <end position="329"/>
    </location>
</feature>
<sequence length="329" mass="36787">MSWITPELIEIVVAILKAIVILLVVVVCGALLSFIERRLLGLWQDRYGPNRVGPFGMFQLGADMLKMFFKEDWTPPFADRLIFTLAPIVAMSALLMAFAVVPVTPTWGVADLNIGLLFFFAMAGLAVYAVLFAGWSSNNKFALLGSLRASAQTISYEVFMALALMGIVAQTGSFNMRDIVEYQAQHTWFIIPQFLGFCTFFIAGVAVTHRHPFDQPEAEQELADGYHIEYAGMKWGMFFVGEYIGIVLISALLVTLFFGGWHGPFGILPQLSFIWFALKTAFFIMLFILLRASLPRPRYDQVMAFSWKFCLPLTLLNLLVTGAFVLAAQ</sequence>
<gene>
    <name evidence="1" type="primary">nuoH</name>
    <name type="ordered locus">Avin_28500</name>
</gene>
<name>NUOH_AZOVD</name>
<protein>
    <recommendedName>
        <fullName evidence="1">NADH-quinone oxidoreductase subunit H</fullName>
        <ecNumber evidence="1">7.1.1.-</ecNumber>
    </recommendedName>
    <alternativeName>
        <fullName evidence="1">NADH dehydrogenase I subunit H</fullName>
    </alternativeName>
    <alternativeName>
        <fullName evidence="1">NDH-1 subunit H</fullName>
    </alternativeName>
</protein>
<reference key="1">
    <citation type="journal article" date="2009" name="J. Bacteriol.">
        <title>Genome sequence of Azotobacter vinelandii, an obligate aerobe specialized to support diverse anaerobic metabolic processes.</title>
        <authorList>
            <person name="Setubal J.C."/>
            <person name="Dos Santos P."/>
            <person name="Goldman B.S."/>
            <person name="Ertesvaag H."/>
            <person name="Espin G."/>
            <person name="Rubio L.M."/>
            <person name="Valla S."/>
            <person name="Almeida N.F."/>
            <person name="Balasubramanian D."/>
            <person name="Cromes L."/>
            <person name="Curatti L."/>
            <person name="Du Z."/>
            <person name="Godsy E."/>
            <person name="Goodner B."/>
            <person name="Hellner-Burris K."/>
            <person name="Hernandez J.A."/>
            <person name="Houmiel K."/>
            <person name="Imperial J."/>
            <person name="Kennedy C."/>
            <person name="Larson T.J."/>
            <person name="Latreille P."/>
            <person name="Ligon L.S."/>
            <person name="Lu J."/>
            <person name="Maerk M."/>
            <person name="Miller N.M."/>
            <person name="Norton S."/>
            <person name="O'Carroll I.P."/>
            <person name="Paulsen I."/>
            <person name="Raulfs E.C."/>
            <person name="Roemer R."/>
            <person name="Rosser J."/>
            <person name="Segura D."/>
            <person name="Slater S."/>
            <person name="Stricklin S.L."/>
            <person name="Studholme D.J."/>
            <person name="Sun J."/>
            <person name="Viana C.J."/>
            <person name="Wallin E."/>
            <person name="Wang B."/>
            <person name="Wheeler C."/>
            <person name="Zhu H."/>
            <person name="Dean D.R."/>
            <person name="Dixon R."/>
            <person name="Wood D."/>
        </authorList>
    </citation>
    <scope>NUCLEOTIDE SEQUENCE [LARGE SCALE GENOMIC DNA]</scope>
    <source>
        <strain>DJ / ATCC BAA-1303</strain>
    </source>
</reference>
<proteinExistence type="inferred from homology"/>